<organism>
    <name type="scientific">Pione vastifica</name>
    <name type="common">Boring sponge</name>
    <name type="synonym">Cliona vastifica</name>
    <dbReference type="NCBI Taxonomy" id="458513"/>
    <lineage>
        <taxon>Eukaryota</taxon>
        <taxon>Metazoa</taxon>
        <taxon>Porifera</taxon>
        <taxon>Demospongiae</taxon>
        <taxon>Heteroscleromorpha</taxon>
        <taxon>Clionaida</taxon>
        <taxon>Clionaidae</taxon>
        <taxon>Pione</taxon>
    </lineage>
</organism>
<accession>P86916</accession>
<name>MAPCN_PIOVA</name>
<feature type="chain" id="PRO_0000410950" description="Mapacalcine">
    <location>
        <begin position="1"/>
        <end position="89"/>
    </location>
</feature>
<feature type="modified residue" description="Glutamine amide" evidence="4">
    <location>
        <position position="89"/>
    </location>
</feature>
<reference evidence="7" key="1">
    <citation type="journal article" date="1997" name="Mol. Pharmacol.">
        <title>Purification of a new dimeric protein from Cliona vastifica sponge, which specifically blocks a non-L-type calcium channel in mouse duodenal myocytes.</title>
        <authorList>
            <person name="Morel J.L."/>
            <person name="Drobecq H."/>
            <person name="Sautiere P."/>
            <person name="Tartar A."/>
            <person name="Mironneau J."/>
            <person name="Qar J."/>
            <person name="Lavie J.L."/>
            <person name="Hugues M."/>
        </authorList>
    </citation>
    <scope>PROTEIN SEQUENCE</scope>
    <scope>FUNCTION</scope>
    <scope>DISULFIDE LINKS</scope>
    <scope>AMIDATION AT GLN-89</scope>
    <scope>MASS SPECTROMETRY</scope>
    <scope>DIMERIZATION</scope>
</reference>
<reference evidence="7" key="2">
    <citation type="journal article" date="1998" name="Biochem. J.">
        <title>125I-Labelled mapacalcine: a specific tool for a pharmacological approach to a receptor associated with a new calcium channel on mouse intestinal membranes.</title>
        <authorList>
            <person name="Vidalenc P."/>
            <person name="Morel J.L."/>
            <person name="Mironneau J."/>
            <person name="Hugues M."/>
        </authorList>
    </citation>
    <scope>FUNCTION</scope>
</reference>
<reference evidence="7" key="3">
    <citation type="journal article" date="2000" name="Brain Res.">
        <title>Distribution of mapacalcine receptors in the central nervous system of rat using the [125I]-labeled mapacalcine derivative.</title>
        <authorList>
            <person name="Mourre C."/>
            <person name="Mokrzycki N."/>
            <person name="Neuilly G."/>
            <person name="Richeux F."/>
            <person name="Creppy E.E."/>
            <person name="Hugues M."/>
        </authorList>
    </citation>
    <scope>FUNCTION</scope>
</reference>
<reference evidence="7" key="4">
    <citation type="journal article" date="2003" name="Biochem. Biophys. Res. Commun.">
        <title>Characterization of mapacalcine-sensitive Ca(2+) channels in rat kidney.</title>
        <authorList>
            <person name="Mourre C."/>
            <person name="Lazou B."/>
            <person name="Cambar J."/>
            <person name="Neuilly G."/>
            <person name="Hugues M."/>
        </authorList>
    </citation>
    <scope>FUNCTION</scope>
</reference>
<reference evidence="7" key="5">
    <citation type="journal article" date="2003" name="Eur. J. Biochem.">
        <title>Mapacalcine specifically blocks hypoxia-induced calcium influx in rat hepatocytes.</title>
        <authorList>
            <person name="Crenesse D."/>
            <person name="Neuilly G."/>
            <person name="Gugenheim J."/>
            <person name="Ferre C."/>
            <person name="Hugues M."/>
        </authorList>
    </citation>
    <scope>FUNCTION</scope>
</reference>
<sequence length="89" mass="9542">ICNGQWTSVGSAGLYYTIKADSMCVDIHYTDGFIQPSCQGLQVIGPCNRYQNGPRDFVACQTSGGSGHPICIQSTNGNIELCANCYCPQ</sequence>
<proteinExistence type="evidence at protein level"/>
<comment type="function">
    <text evidence="1 2 3 4 5">Blocks calcium currents via interaction with a yet unknown target protein. Has no effect on L-type, T-type, N-type or P/Q-type voltage-gated calcium channels (VGCC). Has no effect on voltage-gated potassium or chloride channels. Blocks non-L-type VGCC calcium currents in mouse duodenal myocytes (IC(50)=0.2 uM). Blocks calcium influx induced by hypoxia/reoxygenation in rat hepatocytes.</text>
</comment>
<comment type="subunit">
    <text evidence="4">Homodimer.</text>
</comment>
<comment type="PTM">
    <text evidence="4">Contains disulfide bonds which may also be involved in dimerization.</text>
</comment>
<comment type="mass spectrometry" mass="10182.1" error="0.9" method="Electrospray" evidence="4">
    <text>Monomer.</text>
</comment>
<keyword id="KW-0027">Amidation</keyword>
<keyword id="KW-0903">Direct protein sequencing</keyword>
<keyword id="KW-1015">Disulfide bond</keyword>
<keyword id="KW-0800">Toxin</keyword>
<evidence type="ECO:0000269" key="1">
    <source>
    </source>
</evidence>
<evidence type="ECO:0000269" key="2">
    <source>
    </source>
</evidence>
<evidence type="ECO:0000269" key="3">
    <source>
    </source>
</evidence>
<evidence type="ECO:0000269" key="4">
    <source>
    </source>
</evidence>
<evidence type="ECO:0000269" key="5">
    <source>
    </source>
</evidence>
<evidence type="ECO:0000303" key="6">
    <source>
    </source>
</evidence>
<evidence type="ECO:0000305" key="7"/>
<dbReference type="GO" id="GO:0090729">
    <property type="term" value="F:toxin activity"/>
    <property type="evidence" value="ECO:0007669"/>
    <property type="project" value="UniProtKB-KW"/>
</dbReference>
<protein>
    <recommendedName>
        <fullName evidence="6">Mapacalcine</fullName>
    </recommendedName>
</protein>